<organism>
    <name type="scientific">Clostridioides difficile (strain 630)</name>
    <name type="common">Peptoclostridium difficile</name>
    <dbReference type="NCBI Taxonomy" id="272563"/>
    <lineage>
        <taxon>Bacteria</taxon>
        <taxon>Bacillati</taxon>
        <taxon>Bacillota</taxon>
        <taxon>Clostridia</taxon>
        <taxon>Peptostreptococcales</taxon>
        <taxon>Peptostreptococcaceae</taxon>
        <taxon>Clostridioides</taxon>
    </lineage>
</organism>
<sequence length="558" mass="59986">MGFKSDIEIAQEAKPQDIREVAKKLGLGEDDVELYGKYKAKVDYNLLKRETGKKAKLILTTAINPTPAGEGKTTTTIGVADAFAKLDKNVLVALREPSLGPVFGVKGGAAGGGYAQVVPMEDINLHFTGDFHAIGAANNLLAAMLDNHIHQGNALRIDPKKITWRRCVDMNDRQLRNIVDGMGKKGDGAVRQDGFDITVASEIMAAFCLASDISDLKERLGNIIVGYSYEGEPVTARQLKANGAMAALLKDALKPNLVQTLEGTPSFVHGGPFANIAHGCNSVIATRMAMHFADYVITEAGFGADLGAEKFLDIKCRMANLKPDAVIIVATVRALKYNGGVAKADLNNENLEALEKGLPNLLKHVENITQVYGLPAVVAINRFPLDTEAELKLVEDKCKELGVNVALSEVWAKGGEGGIAVAKEVLRLLDEEENNFRFCYEDDLSIKDKINAIATKIYGADGVDYTPEADKEIANLEKLGFTKVPVCMAKTQYSLTDDQTKLGRPTGFRITVRQATISAGAGFIVALTGEIMKMPGLPKVPAAEKIDVDENGVIAGLF</sequence>
<name>FTHS_CLOD6</name>
<keyword id="KW-0067">ATP-binding</keyword>
<keyword id="KW-0436">Ligase</keyword>
<keyword id="KW-0547">Nucleotide-binding</keyword>
<keyword id="KW-0554">One-carbon metabolism</keyword>
<keyword id="KW-1185">Reference proteome</keyword>
<comment type="catalytic activity">
    <reaction evidence="1">
        <text>(6S)-5,6,7,8-tetrahydrofolate + formate + ATP = (6R)-10-formyltetrahydrofolate + ADP + phosphate</text>
        <dbReference type="Rhea" id="RHEA:20221"/>
        <dbReference type="ChEBI" id="CHEBI:15740"/>
        <dbReference type="ChEBI" id="CHEBI:30616"/>
        <dbReference type="ChEBI" id="CHEBI:43474"/>
        <dbReference type="ChEBI" id="CHEBI:57453"/>
        <dbReference type="ChEBI" id="CHEBI:195366"/>
        <dbReference type="ChEBI" id="CHEBI:456216"/>
        <dbReference type="EC" id="6.3.4.3"/>
    </reaction>
</comment>
<comment type="pathway">
    <text evidence="1">One-carbon metabolism; tetrahydrofolate interconversion.</text>
</comment>
<comment type="similarity">
    <text evidence="1">Belongs to the formate--tetrahydrofolate ligase family.</text>
</comment>
<feature type="chain" id="PRO_0000300518" description="Formate--tetrahydrofolate ligase">
    <location>
        <begin position="1"/>
        <end position="558"/>
    </location>
</feature>
<feature type="binding site" evidence="1">
    <location>
        <begin position="66"/>
        <end position="73"/>
    </location>
    <ligand>
        <name>ATP</name>
        <dbReference type="ChEBI" id="CHEBI:30616"/>
    </ligand>
</feature>
<protein>
    <recommendedName>
        <fullName evidence="1">Formate--tetrahydrofolate ligase</fullName>
        <ecNumber evidence="1">6.3.4.3</ecNumber>
    </recommendedName>
    <alternativeName>
        <fullName evidence="1">Formyltetrahydrofolate synthetase</fullName>
        <shortName evidence="1">FHS</shortName>
        <shortName evidence="1">FTHFS</shortName>
    </alternativeName>
</protein>
<proteinExistence type="inferred from homology"/>
<evidence type="ECO:0000255" key="1">
    <source>
        <dbReference type="HAMAP-Rule" id="MF_01543"/>
    </source>
</evidence>
<gene>
    <name evidence="1" type="primary">fhs</name>
    <name type="ordered locus">CD630_07180</name>
</gene>
<dbReference type="EC" id="6.3.4.3" evidence="1"/>
<dbReference type="EMBL" id="AM180355">
    <property type="protein sequence ID" value="CAJ67552.1"/>
    <property type="molecule type" value="Genomic_DNA"/>
</dbReference>
<dbReference type="RefSeq" id="WP_009888533.1">
    <property type="nucleotide sequence ID" value="NZ_JAUPES010000005.1"/>
</dbReference>
<dbReference type="RefSeq" id="YP_001087195.1">
    <property type="nucleotide sequence ID" value="NC_009089.1"/>
</dbReference>
<dbReference type="SMR" id="Q189R2"/>
<dbReference type="STRING" id="272563.CD630_07180"/>
<dbReference type="EnsemblBacteria" id="CAJ67552">
    <property type="protein sequence ID" value="CAJ67552"/>
    <property type="gene ID" value="CD630_07180"/>
</dbReference>
<dbReference type="KEGG" id="cdf:CD630_07180"/>
<dbReference type="KEGG" id="pdc:CDIF630_00834"/>
<dbReference type="PATRIC" id="fig|272563.120.peg.739"/>
<dbReference type="eggNOG" id="COG2759">
    <property type="taxonomic scope" value="Bacteria"/>
</dbReference>
<dbReference type="OrthoDB" id="9761733at2"/>
<dbReference type="PhylomeDB" id="Q189R2"/>
<dbReference type="BioCyc" id="PDIF272563:G12WB-829-MONOMER"/>
<dbReference type="UniPathway" id="UPA00193"/>
<dbReference type="Proteomes" id="UP000001978">
    <property type="component" value="Chromosome"/>
</dbReference>
<dbReference type="GO" id="GO:0005524">
    <property type="term" value="F:ATP binding"/>
    <property type="evidence" value="ECO:0007669"/>
    <property type="project" value="UniProtKB-UniRule"/>
</dbReference>
<dbReference type="GO" id="GO:0004329">
    <property type="term" value="F:formate-tetrahydrofolate ligase activity"/>
    <property type="evidence" value="ECO:0007669"/>
    <property type="project" value="UniProtKB-UniRule"/>
</dbReference>
<dbReference type="GO" id="GO:0035999">
    <property type="term" value="P:tetrahydrofolate interconversion"/>
    <property type="evidence" value="ECO:0007669"/>
    <property type="project" value="UniProtKB-UniRule"/>
</dbReference>
<dbReference type="CDD" id="cd00477">
    <property type="entry name" value="FTHFS"/>
    <property type="match status" value="1"/>
</dbReference>
<dbReference type="FunFam" id="3.30.1510.10:FF:000001">
    <property type="entry name" value="Formate--tetrahydrofolate ligase"/>
    <property type="match status" value="1"/>
</dbReference>
<dbReference type="FunFam" id="3.10.410.10:FF:000001">
    <property type="entry name" value="Putative formate--tetrahydrofolate ligase"/>
    <property type="match status" value="1"/>
</dbReference>
<dbReference type="Gene3D" id="3.30.1510.10">
    <property type="entry name" value="Domain 2, N(10)-formyltetrahydrofolate synthetase"/>
    <property type="match status" value="1"/>
</dbReference>
<dbReference type="Gene3D" id="3.10.410.10">
    <property type="entry name" value="Formyltetrahydrofolate synthetase, domain 3"/>
    <property type="match status" value="1"/>
</dbReference>
<dbReference type="Gene3D" id="3.40.50.300">
    <property type="entry name" value="P-loop containing nucleotide triphosphate hydrolases"/>
    <property type="match status" value="1"/>
</dbReference>
<dbReference type="HAMAP" id="MF_01543">
    <property type="entry name" value="FTHFS"/>
    <property type="match status" value="1"/>
</dbReference>
<dbReference type="InterPro" id="IPR000559">
    <property type="entry name" value="Formate_THF_ligase"/>
</dbReference>
<dbReference type="InterPro" id="IPR020628">
    <property type="entry name" value="Formate_THF_ligase_CS"/>
</dbReference>
<dbReference type="InterPro" id="IPR027417">
    <property type="entry name" value="P-loop_NTPase"/>
</dbReference>
<dbReference type="NCBIfam" id="NF010030">
    <property type="entry name" value="PRK13505.1"/>
    <property type="match status" value="1"/>
</dbReference>
<dbReference type="Pfam" id="PF01268">
    <property type="entry name" value="FTHFS"/>
    <property type="match status" value="1"/>
</dbReference>
<dbReference type="SUPFAM" id="SSF52540">
    <property type="entry name" value="P-loop containing nucleoside triphosphate hydrolases"/>
    <property type="match status" value="1"/>
</dbReference>
<dbReference type="PROSITE" id="PS00721">
    <property type="entry name" value="FTHFS_1"/>
    <property type="match status" value="1"/>
</dbReference>
<dbReference type="PROSITE" id="PS00722">
    <property type="entry name" value="FTHFS_2"/>
    <property type="match status" value="1"/>
</dbReference>
<accession>Q189R2</accession>
<reference key="1">
    <citation type="journal article" date="2006" name="Nat. Genet.">
        <title>The multidrug-resistant human pathogen Clostridium difficile has a highly mobile, mosaic genome.</title>
        <authorList>
            <person name="Sebaihia M."/>
            <person name="Wren B.W."/>
            <person name="Mullany P."/>
            <person name="Fairweather N.F."/>
            <person name="Minton N."/>
            <person name="Stabler R."/>
            <person name="Thomson N.R."/>
            <person name="Roberts A.P."/>
            <person name="Cerdeno-Tarraga A.M."/>
            <person name="Wang H."/>
            <person name="Holden M.T.G."/>
            <person name="Wright A."/>
            <person name="Churcher C."/>
            <person name="Quail M.A."/>
            <person name="Baker S."/>
            <person name="Bason N."/>
            <person name="Brooks K."/>
            <person name="Chillingworth T."/>
            <person name="Cronin A."/>
            <person name="Davis P."/>
            <person name="Dowd L."/>
            <person name="Fraser A."/>
            <person name="Feltwell T."/>
            <person name="Hance Z."/>
            <person name="Holroyd S."/>
            <person name="Jagels K."/>
            <person name="Moule S."/>
            <person name="Mungall K."/>
            <person name="Price C."/>
            <person name="Rabbinowitsch E."/>
            <person name="Sharp S."/>
            <person name="Simmonds M."/>
            <person name="Stevens K."/>
            <person name="Unwin L."/>
            <person name="Whithead S."/>
            <person name="Dupuy B."/>
            <person name="Dougan G."/>
            <person name="Barrell B."/>
            <person name="Parkhill J."/>
        </authorList>
    </citation>
    <scope>NUCLEOTIDE SEQUENCE [LARGE SCALE GENOMIC DNA]</scope>
    <source>
        <strain>630</strain>
    </source>
</reference>